<proteinExistence type="inferred from homology"/>
<feature type="chain" id="PRO_0000180321" description="3-oxoacyl-[acyl-carrier-protein] synthase 2">
    <location>
        <begin position="1"/>
        <end position="414"/>
    </location>
</feature>
<feature type="domain" description="Ketosynthase family 3 (KS3)" evidence="2">
    <location>
        <begin position="4"/>
        <end position="411"/>
    </location>
</feature>
<feature type="active site" description="For beta-ketoacyl synthase activity" evidence="2">
    <location>
        <position position="165"/>
    </location>
</feature>
<feature type="active site" description="For beta-ketoacyl synthase activity" evidence="2">
    <location>
        <position position="304"/>
    </location>
</feature>
<feature type="active site" description="For beta-ketoacyl synthase activity" evidence="2">
    <location>
        <position position="341"/>
    </location>
</feature>
<accession>Q99VA6</accession>
<name>FABF_STAAM</name>
<sequence length="414" mass="43725">MSQNKRVVITGMGALSPIGNDVKTTWENALKGVNGIDKITRIDTEPYSVHLAGELKNFNIEDHIDKKEARRMDRFTQYAIVAAREAVKDAQLDINDNTADRIGVWIGSGIGGMETFEIAHKQLMDKGPRRVSPFFVPMLIPDMATGQVSIDLGAKGPNGATVTACATGTNSIGEAFKIVQRGDADAMITGGTEAPITHMAIAGFSASRALSTNDDIETACRPFQEGRDGFVMGEGAGILVIESLESAQARGANIYAEIVGYGTTGDAYHITAPAPEGEGGSRAMQAAMDDAGIEPKDVQYLNAHGTSTPVGDLNEVKAIKNTFGEAAKHLKVSSTKSMTGHLLGATGGIEAIFSALSIKDSKVAPTIHAVTPDPECDLDIVPNEAQDLDITYAMSNSLGFGGHNAVLVFKKFEA</sequence>
<comment type="function">
    <text evidence="1">Involved in the type II fatty acid elongation cycle. Catalyzes the elongation of a wide range of acyl-ACP by the addition of two carbons from malonyl-ACP to an acyl acceptor. Can efficiently catalyze the conversion of palmitoleoyl-ACP (cis-hexadec-9-enoyl-ACP) to cis-vaccenoyl-ACP (cis-octadec-11-enoyl-ACP), an essential step in the thermal regulation of fatty acid composition.</text>
</comment>
<comment type="catalytic activity">
    <reaction evidence="1">
        <text>a fatty acyl-[ACP] + malonyl-[ACP] + H(+) = a 3-oxoacyl-[ACP] + holo-[ACP] + CO2</text>
        <dbReference type="Rhea" id="RHEA:22836"/>
        <dbReference type="Rhea" id="RHEA-COMP:9623"/>
        <dbReference type="Rhea" id="RHEA-COMP:9685"/>
        <dbReference type="Rhea" id="RHEA-COMP:9916"/>
        <dbReference type="Rhea" id="RHEA-COMP:14125"/>
        <dbReference type="ChEBI" id="CHEBI:15378"/>
        <dbReference type="ChEBI" id="CHEBI:16526"/>
        <dbReference type="ChEBI" id="CHEBI:64479"/>
        <dbReference type="ChEBI" id="CHEBI:78449"/>
        <dbReference type="ChEBI" id="CHEBI:78776"/>
        <dbReference type="ChEBI" id="CHEBI:138651"/>
    </reaction>
</comment>
<comment type="catalytic activity">
    <reaction evidence="1">
        <text>(9Z)-hexadecenoyl-[ACP] + malonyl-[ACP] + H(+) = 3-oxo-(11Z)-octadecenoyl-[ACP] + holo-[ACP] + CO2</text>
        <dbReference type="Rhea" id="RHEA:55040"/>
        <dbReference type="Rhea" id="RHEA-COMP:9623"/>
        <dbReference type="Rhea" id="RHEA-COMP:9685"/>
        <dbReference type="Rhea" id="RHEA-COMP:10800"/>
        <dbReference type="Rhea" id="RHEA-COMP:14074"/>
        <dbReference type="ChEBI" id="CHEBI:15378"/>
        <dbReference type="ChEBI" id="CHEBI:16526"/>
        <dbReference type="ChEBI" id="CHEBI:64479"/>
        <dbReference type="ChEBI" id="CHEBI:78449"/>
        <dbReference type="ChEBI" id="CHEBI:83989"/>
        <dbReference type="ChEBI" id="CHEBI:138538"/>
        <dbReference type="EC" id="2.3.1.179"/>
    </reaction>
</comment>
<comment type="pathway">
    <text evidence="1">Lipid metabolism; fatty acid biosynthesis.</text>
</comment>
<comment type="similarity">
    <text evidence="3">Belongs to the thiolase-like superfamily. Beta-ketoacyl-ACP synthases family.</text>
</comment>
<keyword id="KW-0012">Acyltransferase</keyword>
<keyword id="KW-0275">Fatty acid biosynthesis</keyword>
<keyword id="KW-0276">Fatty acid metabolism</keyword>
<keyword id="KW-0444">Lipid biosynthesis</keyword>
<keyword id="KW-0443">Lipid metabolism</keyword>
<keyword id="KW-0808">Transferase</keyword>
<organism>
    <name type="scientific">Staphylococcus aureus (strain Mu50 / ATCC 700699)</name>
    <dbReference type="NCBI Taxonomy" id="158878"/>
    <lineage>
        <taxon>Bacteria</taxon>
        <taxon>Bacillati</taxon>
        <taxon>Bacillota</taxon>
        <taxon>Bacilli</taxon>
        <taxon>Bacillales</taxon>
        <taxon>Staphylococcaceae</taxon>
        <taxon>Staphylococcus</taxon>
    </lineage>
</organism>
<gene>
    <name type="primary">fabF</name>
    <name type="ordered locus">SAV0984</name>
</gene>
<protein>
    <recommendedName>
        <fullName>3-oxoacyl-[acyl-carrier-protein] synthase 2</fullName>
        <ecNumber evidence="1">2.3.1.179</ecNumber>
    </recommendedName>
    <alternativeName>
        <fullName>3-oxoacyl-[acyl-carrier-protein] synthase II</fullName>
    </alternativeName>
    <alternativeName>
        <fullName>Beta-ketoacyl-ACP synthase II</fullName>
        <shortName>KAS II</shortName>
    </alternativeName>
</protein>
<reference key="1">
    <citation type="journal article" date="2001" name="Lancet">
        <title>Whole genome sequencing of meticillin-resistant Staphylococcus aureus.</title>
        <authorList>
            <person name="Kuroda M."/>
            <person name="Ohta T."/>
            <person name="Uchiyama I."/>
            <person name="Baba T."/>
            <person name="Yuzawa H."/>
            <person name="Kobayashi I."/>
            <person name="Cui L."/>
            <person name="Oguchi A."/>
            <person name="Aoki K."/>
            <person name="Nagai Y."/>
            <person name="Lian J.-Q."/>
            <person name="Ito T."/>
            <person name="Kanamori M."/>
            <person name="Matsumaru H."/>
            <person name="Maruyama A."/>
            <person name="Murakami H."/>
            <person name="Hosoyama A."/>
            <person name="Mizutani-Ui Y."/>
            <person name="Takahashi N.K."/>
            <person name="Sawano T."/>
            <person name="Inoue R."/>
            <person name="Kaito C."/>
            <person name="Sekimizu K."/>
            <person name="Hirakawa H."/>
            <person name="Kuhara S."/>
            <person name="Goto S."/>
            <person name="Yabuzaki J."/>
            <person name="Kanehisa M."/>
            <person name="Yamashita A."/>
            <person name="Oshima K."/>
            <person name="Furuya K."/>
            <person name="Yoshino C."/>
            <person name="Shiba T."/>
            <person name="Hattori M."/>
            <person name="Ogasawara N."/>
            <person name="Hayashi H."/>
            <person name="Hiramatsu K."/>
        </authorList>
    </citation>
    <scope>NUCLEOTIDE SEQUENCE [LARGE SCALE GENOMIC DNA]</scope>
    <source>
        <strain>Mu50 / ATCC 700699</strain>
    </source>
</reference>
<evidence type="ECO:0000250" key="1">
    <source>
        <dbReference type="UniProtKB" id="P0AAI5"/>
    </source>
</evidence>
<evidence type="ECO:0000255" key="2">
    <source>
        <dbReference type="PROSITE-ProRule" id="PRU01348"/>
    </source>
</evidence>
<evidence type="ECO:0000305" key="3"/>
<dbReference type="EC" id="2.3.1.179" evidence="1"/>
<dbReference type="EMBL" id="BA000017">
    <property type="protein sequence ID" value="BAB57146.1"/>
    <property type="molecule type" value="Genomic_DNA"/>
</dbReference>
<dbReference type="RefSeq" id="WP_000081231.1">
    <property type="nucleotide sequence ID" value="NC_002758.2"/>
</dbReference>
<dbReference type="SMR" id="Q99VA6"/>
<dbReference type="KEGG" id="sav:SAV0984"/>
<dbReference type="HOGENOM" id="CLU_000022_69_2_9"/>
<dbReference type="PhylomeDB" id="Q99VA6"/>
<dbReference type="UniPathway" id="UPA00094"/>
<dbReference type="Proteomes" id="UP000002481">
    <property type="component" value="Chromosome"/>
</dbReference>
<dbReference type="GO" id="GO:0005829">
    <property type="term" value="C:cytosol"/>
    <property type="evidence" value="ECO:0007669"/>
    <property type="project" value="TreeGrafter"/>
</dbReference>
<dbReference type="GO" id="GO:0004315">
    <property type="term" value="F:3-oxoacyl-[acyl-carrier-protein] synthase activity"/>
    <property type="evidence" value="ECO:0007669"/>
    <property type="project" value="UniProtKB-EC"/>
</dbReference>
<dbReference type="GO" id="GO:0006633">
    <property type="term" value="P:fatty acid biosynthetic process"/>
    <property type="evidence" value="ECO:0007669"/>
    <property type="project" value="UniProtKB-UniPathway"/>
</dbReference>
<dbReference type="CDD" id="cd00834">
    <property type="entry name" value="KAS_I_II"/>
    <property type="match status" value="1"/>
</dbReference>
<dbReference type="FunFam" id="3.40.47.10:FF:000026">
    <property type="entry name" value="3-oxoacyl-[acyl-carrier-protein] synthase 2"/>
    <property type="match status" value="1"/>
</dbReference>
<dbReference type="Gene3D" id="3.40.47.10">
    <property type="match status" value="1"/>
</dbReference>
<dbReference type="InterPro" id="IPR017568">
    <property type="entry name" value="3-oxoacyl-ACP_synth-2"/>
</dbReference>
<dbReference type="InterPro" id="IPR000794">
    <property type="entry name" value="Beta-ketoacyl_synthase"/>
</dbReference>
<dbReference type="InterPro" id="IPR018201">
    <property type="entry name" value="Ketoacyl_synth_AS"/>
</dbReference>
<dbReference type="InterPro" id="IPR014031">
    <property type="entry name" value="Ketoacyl_synth_C"/>
</dbReference>
<dbReference type="InterPro" id="IPR014030">
    <property type="entry name" value="Ketoacyl_synth_N"/>
</dbReference>
<dbReference type="InterPro" id="IPR020841">
    <property type="entry name" value="PKS_Beta-ketoAc_synthase_dom"/>
</dbReference>
<dbReference type="InterPro" id="IPR016039">
    <property type="entry name" value="Thiolase-like"/>
</dbReference>
<dbReference type="NCBIfam" id="TIGR03150">
    <property type="entry name" value="fabF"/>
    <property type="match status" value="1"/>
</dbReference>
<dbReference type="NCBIfam" id="NF004970">
    <property type="entry name" value="PRK06333.1"/>
    <property type="match status" value="1"/>
</dbReference>
<dbReference type="NCBIfam" id="NF005589">
    <property type="entry name" value="PRK07314.1"/>
    <property type="match status" value="1"/>
</dbReference>
<dbReference type="PANTHER" id="PTHR11712:SF336">
    <property type="entry name" value="3-OXOACYL-[ACYL-CARRIER-PROTEIN] SYNTHASE, MITOCHONDRIAL"/>
    <property type="match status" value="1"/>
</dbReference>
<dbReference type="PANTHER" id="PTHR11712">
    <property type="entry name" value="POLYKETIDE SYNTHASE-RELATED"/>
    <property type="match status" value="1"/>
</dbReference>
<dbReference type="Pfam" id="PF00109">
    <property type="entry name" value="ketoacyl-synt"/>
    <property type="match status" value="1"/>
</dbReference>
<dbReference type="Pfam" id="PF02801">
    <property type="entry name" value="Ketoacyl-synt_C"/>
    <property type="match status" value="1"/>
</dbReference>
<dbReference type="PIRSF" id="PIRSF000447">
    <property type="entry name" value="KAS_II"/>
    <property type="match status" value="1"/>
</dbReference>
<dbReference type="SMART" id="SM00825">
    <property type="entry name" value="PKS_KS"/>
    <property type="match status" value="1"/>
</dbReference>
<dbReference type="SUPFAM" id="SSF53901">
    <property type="entry name" value="Thiolase-like"/>
    <property type="match status" value="2"/>
</dbReference>
<dbReference type="PROSITE" id="PS00606">
    <property type="entry name" value="KS3_1"/>
    <property type="match status" value="1"/>
</dbReference>
<dbReference type="PROSITE" id="PS52004">
    <property type="entry name" value="KS3_2"/>
    <property type="match status" value="1"/>
</dbReference>